<accession>A8LI32</accession>
<keyword id="KW-0030">Aminoacyl-tRNA synthetase</keyword>
<keyword id="KW-0067">ATP-binding</keyword>
<keyword id="KW-0963">Cytoplasm</keyword>
<keyword id="KW-0436">Ligase</keyword>
<keyword id="KW-0547">Nucleotide-binding</keyword>
<keyword id="KW-0648">Protein biosynthesis</keyword>
<keyword id="KW-1185">Reference proteome</keyword>
<organism>
    <name type="scientific">Dinoroseobacter shibae (strain DSM 16493 / NCIMB 14021 / DFL 12)</name>
    <dbReference type="NCBI Taxonomy" id="398580"/>
    <lineage>
        <taxon>Bacteria</taxon>
        <taxon>Pseudomonadati</taxon>
        <taxon>Pseudomonadota</taxon>
        <taxon>Alphaproteobacteria</taxon>
        <taxon>Rhodobacterales</taxon>
        <taxon>Roseobacteraceae</taxon>
        <taxon>Dinoroseobacter</taxon>
    </lineage>
</organism>
<reference key="1">
    <citation type="journal article" date="2010" name="ISME J.">
        <title>The complete genome sequence of the algal symbiont Dinoroseobacter shibae: a hitchhiker's guide to life in the sea.</title>
        <authorList>
            <person name="Wagner-Dobler I."/>
            <person name="Ballhausen B."/>
            <person name="Berger M."/>
            <person name="Brinkhoff T."/>
            <person name="Buchholz I."/>
            <person name="Bunk B."/>
            <person name="Cypionka H."/>
            <person name="Daniel R."/>
            <person name="Drepper T."/>
            <person name="Gerdts G."/>
            <person name="Hahnke S."/>
            <person name="Han C."/>
            <person name="Jahn D."/>
            <person name="Kalhoefer D."/>
            <person name="Kiss H."/>
            <person name="Klenk H.P."/>
            <person name="Kyrpides N."/>
            <person name="Liebl W."/>
            <person name="Liesegang H."/>
            <person name="Meincke L."/>
            <person name="Pati A."/>
            <person name="Petersen J."/>
            <person name="Piekarski T."/>
            <person name="Pommerenke C."/>
            <person name="Pradella S."/>
            <person name="Pukall R."/>
            <person name="Rabus R."/>
            <person name="Stackebrandt E."/>
            <person name="Thole S."/>
            <person name="Thompson L."/>
            <person name="Tielen P."/>
            <person name="Tomasch J."/>
            <person name="von Jan M."/>
            <person name="Wanphrut N."/>
            <person name="Wichels A."/>
            <person name="Zech H."/>
            <person name="Simon M."/>
        </authorList>
    </citation>
    <scope>NUCLEOTIDE SEQUENCE [LARGE SCALE GENOMIC DNA]</scope>
    <source>
        <strain>DSM 16493 / NCIMB 14021 / DFL 12</strain>
    </source>
</reference>
<evidence type="ECO:0000255" key="1">
    <source>
        <dbReference type="HAMAP-Rule" id="MF_00044"/>
    </source>
</evidence>
<sequence length="590" mass="66396">MHAFRTHTCAELTKDAVGQTVRLSGWVHRVRDHGGVLFIDLRDHYGMTQVLCDPDSPVFSQVEKVRSEWCIRIDGTVKARDESLINPKIPTGEIEVFIRDMEVLGTAEELPLPVFGDQEYPEETRLKYRFLDLRRESLHDNIMLRSKVVQSIRKRMWDIDFTEFQTPIITASSPEGARDFLVPSRLHPGKFYALPQAPQQFKQLIMVGGFDKYFQIAPCFRDEDPRADRSPTDFYQLDLEMSFVSQQDVFDTIQPVIAGIFEEFGGGRRVDTDWPLISYRDSALWYGTDKPDLRNPIKMQIVSDHFAGSGFAIFAKLLEQEGTEIRAIPAPGGGSRKFCDRMNKFAQEQGLPGMGYIFWRDQGQGMEAAGPLAKNIGPERTEAIRQQLGLQVGDAAFFLGGKPASFEAVAGRARTVIGEELGLIDQDRFAFAWIVDFPMYEKDDEGRIDFSHNPFSMPQGGMAALEGDPLEVLGYQYDLACNGYELVSGAIRNHKLDIMYKAFEIAGYGADEVEKRFGGMVNAFKYGPPPHGGCAAGIDRIVMLLADTANIREVIMFPMNQRAEDLMMNAPSEPTGEQLRDLSLRVIPQE</sequence>
<protein>
    <recommendedName>
        <fullName evidence="1">Aspartate--tRNA(Asp/Asn) ligase</fullName>
        <ecNumber evidence="1">6.1.1.23</ecNumber>
    </recommendedName>
    <alternativeName>
        <fullName evidence="1">Aspartyl-tRNA synthetase</fullName>
        <shortName evidence="1">AspRS</shortName>
    </alternativeName>
    <alternativeName>
        <fullName evidence="1">Non-discriminating aspartyl-tRNA synthetase</fullName>
        <shortName evidence="1">ND-AspRS</shortName>
    </alternativeName>
</protein>
<gene>
    <name evidence="1" type="primary">aspS</name>
    <name type="ordered locus">Dshi_2633</name>
</gene>
<dbReference type="EC" id="6.1.1.23" evidence="1"/>
<dbReference type="EMBL" id="CP000830">
    <property type="protein sequence ID" value="ABV94366.1"/>
    <property type="molecule type" value="Genomic_DNA"/>
</dbReference>
<dbReference type="RefSeq" id="WP_012179294.1">
    <property type="nucleotide sequence ID" value="NC_009952.1"/>
</dbReference>
<dbReference type="SMR" id="A8LI32"/>
<dbReference type="STRING" id="398580.Dshi_2633"/>
<dbReference type="KEGG" id="dsh:Dshi_2633"/>
<dbReference type="eggNOG" id="COG0173">
    <property type="taxonomic scope" value="Bacteria"/>
</dbReference>
<dbReference type="HOGENOM" id="CLU_014330_3_2_5"/>
<dbReference type="OrthoDB" id="9802326at2"/>
<dbReference type="Proteomes" id="UP000006833">
    <property type="component" value="Chromosome"/>
</dbReference>
<dbReference type="GO" id="GO:0005737">
    <property type="term" value="C:cytoplasm"/>
    <property type="evidence" value="ECO:0007669"/>
    <property type="project" value="UniProtKB-SubCell"/>
</dbReference>
<dbReference type="GO" id="GO:0004815">
    <property type="term" value="F:aspartate-tRNA ligase activity"/>
    <property type="evidence" value="ECO:0007669"/>
    <property type="project" value="UniProtKB-UniRule"/>
</dbReference>
<dbReference type="GO" id="GO:0050560">
    <property type="term" value="F:aspartate-tRNA(Asn) ligase activity"/>
    <property type="evidence" value="ECO:0007669"/>
    <property type="project" value="UniProtKB-EC"/>
</dbReference>
<dbReference type="GO" id="GO:0005524">
    <property type="term" value="F:ATP binding"/>
    <property type="evidence" value="ECO:0007669"/>
    <property type="project" value="UniProtKB-UniRule"/>
</dbReference>
<dbReference type="GO" id="GO:0003676">
    <property type="term" value="F:nucleic acid binding"/>
    <property type="evidence" value="ECO:0007669"/>
    <property type="project" value="InterPro"/>
</dbReference>
<dbReference type="GO" id="GO:0006422">
    <property type="term" value="P:aspartyl-tRNA aminoacylation"/>
    <property type="evidence" value="ECO:0007669"/>
    <property type="project" value="UniProtKB-UniRule"/>
</dbReference>
<dbReference type="CDD" id="cd04317">
    <property type="entry name" value="EcAspRS_like_N"/>
    <property type="match status" value="1"/>
</dbReference>
<dbReference type="Gene3D" id="3.30.930.10">
    <property type="entry name" value="Bira Bifunctional Protein, Domain 2"/>
    <property type="match status" value="1"/>
</dbReference>
<dbReference type="Gene3D" id="3.30.1360.30">
    <property type="entry name" value="GAD-like domain"/>
    <property type="match status" value="1"/>
</dbReference>
<dbReference type="Gene3D" id="2.40.50.140">
    <property type="entry name" value="Nucleic acid-binding proteins"/>
    <property type="match status" value="1"/>
</dbReference>
<dbReference type="HAMAP" id="MF_00044">
    <property type="entry name" value="Asp_tRNA_synth_type1"/>
    <property type="match status" value="1"/>
</dbReference>
<dbReference type="InterPro" id="IPR004364">
    <property type="entry name" value="Aa-tRNA-synt_II"/>
</dbReference>
<dbReference type="InterPro" id="IPR006195">
    <property type="entry name" value="aa-tRNA-synth_II"/>
</dbReference>
<dbReference type="InterPro" id="IPR045864">
    <property type="entry name" value="aa-tRNA-synth_II/BPL/LPL"/>
</dbReference>
<dbReference type="InterPro" id="IPR004524">
    <property type="entry name" value="Asp-tRNA-ligase_1"/>
</dbReference>
<dbReference type="InterPro" id="IPR047089">
    <property type="entry name" value="Asp-tRNA-ligase_1_N"/>
</dbReference>
<dbReference type="InterPro" id="IPR002312">
    <property type="entry name" value="Asp/Asn-tRNA-synth_IIb"/>
</dbReference>
<dbReference type="InterPro" id="IPR004115">
    <property type="entry name" value="GAD-like_sf"/>
</dbReference>
<dbReference type="InterPro" id="IPR029351">
    <property type="entry name" value="GAD_dom"/>
</dbReference>
<dbReference type="InterPro" id="IPR012340">
    <property type="entry name" value="NA-bd_OB-fold"/>
</dbReference>
<dbReference type="InterPro" id="IPR004365">
    <property type="entry name" value="NA-bd_OB_tRNA"/>
</dbReference>
<dbReference type="NCBIfam" id="TIGR00459">
    <property type="entry name" value="aspS_bact"/>
    <property type="match status" value="1"/>
</dbReference>
<dbReference type="NCBIfam" id="NF001750">
    <property type="entry name" value="PRK00476.1"/>
    <property type="match status" value="1"/>
</dbReference>
<dbReference type="PANTHER" id="PTHR22594:SF5">
    <property type="entry name" value="ASPARTATE--TRNA LIGASE, MITOCHONDRIAL"/>
    <property type="match status" value="1"/>
</dbReference>
<dbReference type="PANTHER" id="PTHR22594">
    <property type="entry name" value="ASPARTYL/LYSYL-TRNA SYNTHETASE"/>
    <property type="match status" value="1"/>
</dbReference>
<dbReference type="Pfam" id="PF02938">
    <property type="entry name" value="GAD"/>
    <property type="match status" value="1"/>
</dbReference>
<dbReference type="Pfam" id="PF00152">
    <property type="entry name" value="tRNA-synt_2"/>
    <property type="match status" value="1"/>
</dbReference>
<dbReference type="Pfam" id="PF01336">
    <property type="entry name" value="tRNA_anti-codon"/>
    <property type="match status" value="1"/>
</dbReference>
<dbReference type="PRINTS" id="PR01042">
    <property type="entry name" value="TRNASYNTHASP"/>
</dbReference>
<dbReference type="SUPFAM" id="SSF55681">
    <property type="entry name" value="Class II aaRS and biotin synthetases"/>
    <property type="match status" value="1"/>
</dbReference>
<dbReference type="SUPFAM" id="SSF55261">
    <property type="entry name" value="GAD domain-like"/>
    <property type="match status" value="1"/>
</dbReference>
<dbReference type="SUPFAM" id="SSF50249">
    <property type="entry name" value="Nucleic acid-binding proteins"/>
    <property type="match status" value="1"/>
</dbReference>
<dbReference type="PROSITE" id="PS50862">
    <property type="entry name" value="AA_TRNA_LIGASE_II"/>
    <property type="match status" value="1"/>
</dbReference>
<feature type="chain" id="PRO_1000074701" description="Aspartate--tRNA(Asp/Asn) ligase">
    <location>
        <begin position="1"/>
        <end position="590"/>
    </location>
</feature>
<feature type="region of interest" description="Aspartate" evidence="1">
    <location>
        <begin position="199"/>
        <end position="202"/>
    </location>
</feature>
<feature type="binding site" evidence="1">
    <location>
        <position position="175"/>
    </location>
    <ligand>
        <name>L-aspartate</name>
        <dbReference type="ChEBI" id="CHEBI:29991"/>
    </ligand>
</feature>
<feature type="binding site" evidence="1">
    <location>
        <begin position="221"/>
        <end position="223"/>
    </location>
    <ligand>
        <name>ATP</name>
        <dbReference type="ChEBI" id="CHEBI:30616"/>
    </ligand>
</feature>
<feature type="binding site" evidence="1">
    <location>
        <position position="221"/>
    </location>
    <ligand>
        <name>L-aspartate</name>
        <dbReference type="ChEBI" id="CHEBI:29991"/>
    </ligand>
</feature>
<feature type="binding site" evidence="1">
    <location>
        <position position="452"/>
    </location>
    <ligand>
        <name>L-aspartate</name>
        <dbReference type="ChEBI" id="CHEBI:29991"/>
    </ligand>
</feature>
<feature type="binding site" evidence="1">
    <location>
        <position position="485"/>
    </location>
    <ligand>
        <name>ATP</name>
        <dbReference type="ChEBI" id="CHEBI:30616"/>
    </ligand>
</feature>
<feature type="binding site" evidence="1">
    <location>
        <position position="492"/>
    </location>
    <ligand>
        <name>L-aspartate</name>
        <dbReference type="ChEBI" id="CHEBI:29991"/>
    </ligand>
</feature>
<feature type="binding site" evidence="1">
    <location>
        <begin position="537"/>
        <end position="540"/>
    </location>
    <ligand>
        <name>ATP</name>
        <dbReference type="ChEBI" id="CHEBI:30616"/>
    </ligand>
</feature>
<feature type="site" description="Important for tRNA non-discrimination" evidence="1">
    <location>
        <position position="33"/>
    </location>
</feature>
<name>SYDND_DINSH</name>
<proteinExistence type="inferred from homology"/>
<comment type="function">
    <text evidence="1">Aspartyl-tRNA synthetase with relaxed tRNA specificity since it is able to aspartylate not only its cognate tRNA(Asp) but also tRNA(Asn). Reaction proceeds in two steps: L-aspartate is first activated by ATP to form Asp-AMP and then transferred to the acceptor end of tRNA(Asp/Asn).</text>
</comment>
<comment type="catalytic activity">
    <reaction evidence="1">
        <text>tRNA(Asx) + L-aspartate + ATP = L-aspartyl-tRNA(Asx) + AMP + diphosphate</text>
        <dbReference type="Rhea" id="RHEA:18349"/>
        <dbReference type="Rhea" id="RHEA-COMP:9710"/>
        <dbReference type="Rhea" id="RHEA-COMP:9711"/>
        <dbReference type="ChEBI" id="CHEBI:29991"/>
        <dbReference type="ChEBI" id="CHEBI:30616"/>
        <dbReference type="ChEBI" id="CHEBI:33019"/>
        <dbReference type="ChEBI" id="CHEBI:78442"/>
        <dbReference type="ChEBI" id="CHEBI:78516"/>
        <dbReference type="ChEBI" id="CHEBI:456215"/>
        <dbReference type="EC" id="6.1.1.23"/>
    </reaction>
</comment>
<comment type="subunit">
    <text evidence="1">Homodimer.</text>
</comment>
<comment type="subcellular location">
    <subcellularLocation>
        <location evidence="1">Cytoplasm</location>
    </subcellularLocation>
</comment>
<comment type="similarity">
    <text evidence="1">Belongs to the class-II aminoacyl-tRNA synthetase family. Type 1 subfamily.</text>
</comment>